<evidence type="ECO:0000250" key="1"/>
<evidence type="ECO:0000255" key="2"/>
<evidence type="ECO:0000305" key="3"/>
<dbReference type="EMBL" id="BC090379">
    <property type="protein sequence ID" value="AAH90379.1"/>
    <property type="molecule type" value="mRNA"/>
</dbReference>
<dbReference type="RefSeq" id="NP_001015865.1">
    <property type="nucleotide sequence ID" value="NM_001015865.1"/>
</dbReference>
<dbReference type="SMR" id="Q5EAL3"/>
<dbReference type="FunCoup" id="Q5EAL3">
    <property type="interactions" value="822"/>
</dbReference>
<dbReference type="STRING" id="8364.ENSXETP00000022533"/>
<dbReference type="PaxDb" id="8364-ENSXETP00000042092"/>
<dbReference type="DNASU" id="548582"/>
<dbReference type="GeneID" id="548582"/>
<dbReference type="KEGG" id="xtr:548582"/>
<dbReference type="AGR" id="Xenbase:XB-GENE-970558"/>
<dbReference type="CTD" id="55974"/>
<dbReference type="Xenbase" id="XB-GENE-970558">
    <property type="gene designation" value="slc50a1"/>
</dbReference>
<dbReference type="eggNOG" id="KOG1623">
    <property type="taxonomic scope" value="Eukaryota"/>
</dbReference>
<dbReference type="InParanoid" id="Q5EAL3"/>
<dbReference type="OMA" id="QLNDYYI"/>
<dbReference type="OrthoDB" id="409725at2759"/>
<dbReference type="Reactome" id="R-XTR-189200">
    <property type="pathway name" value="Cellular hexose transport"/>
</dbReference>
<dbReference type="Proteomes" id="UP000008143">
    <property type="component" value="Chromosome 8"/>
</dbReference>
<dbReference type="GO" id="GO:0000139">
    <property type="term" value="C:Golgi membrane"/>
    <property type="evidence" value="ECO:0007669"/>
    <property type="project" value="UniProtKB-SubCell"/>
</dbReference>
<dbReference type="GO" id="GO:0005886">
    <property type="term" value="C:plasma membrane"/>
    <property type="evidence" value="ECO:0007669"/>
    <property type="project" value="UniProtKB-SubCell"/>
</dbReference>
<dbReference type="GO" id="GO:0051119">
    <property type="term" value="F:sugar transmembrane transporter activity"/>
    <property type="evidence" value="ECO:0000250"/>
    <property type="project" value="UniProtKB"/>
</dbReference>
<dbReference type="FunFam" id="1.20.1280.290:FF:000021">
    <property type="entry name" value="Solute carrier family 50 member 1"/>
    <property type="match status" value="1"/>
</dbReference>
<dbReference type="FunFam" id="1.20.1280.290:FF:000010">
    <property type="entry name" value="Sugar transporter SWEET"/>
    <property type="match status" value="1"/>
</dbReference>
<dbReference type="Gene3D" id="1.20.1280.290">
    <property type="match status" value="2"/>
</dbReference>
<dbReference type="InterPro" id="IPR047664">
    <property type="entry name" value="SWEET"/>
</dbReference>
<dbReference type="InterPro" id="IPR004316">
    <property type="entry name" value="SWEET_rpt"/>
</dbReference>
<dbReference type="PANTHER" id="PTHR10791">
    <property type="entry name" value="RAG1-ACTIVATING PROTEIN 1"/>
    <property type="match status" value="1"/>
</dbReference>
<dbReference type="PANTHER" id="PTHR10791:SF30">
    <property type="entry name" value="SUGAR TRANSPORTER SWEET1"/>
    <property type="match status" value="1"/>
</dbReference>
<dbReference type="Pfam" id="PF03083">
    <property type="entry name" value="MtN3_slv"/>
    <property type="match status" value="2"/>
</dbReference>
<sequence>MDWMWLLSGACIVFTLGMFSSGLSDLRVMVAKRSVENIQFLPFLTTDLNNLGWFYYGYLKGDGTLIIVNLIGASLQTLYMAAYILYSLERRYVVSQVLVSLGVLFLAHCYFTLWTPDINSRLNQLGLFCSIFTISMYLSPLADLAQIIKSKSTKCLSFPLTVATFLTSTSWVLYGWVQSDLYITVPNFPGIVTSLLRFWLFSRYPPDQPAYSLL</sequence>
<feature type="chain" id="PRO_0000345121" description="Sugar transporter SWEET1">
    <location>
        <begin position="1"/>
        <end position="214"/>
    </location>
</feature>
<feature type="transmembrane region" description="Helical; Name=1" evidence="2">
    <location>
        <begin position="3"/>
        <end position="23"/>
    </location>
</feature>
<feature type="transmembrane region" description="Helical; Name=2" evidence="2">
    <location>
        <begin position="38"/>
        <end position="58"/>
    </location>
</feature>
<feature type="transmembrane region" description="Helical; Name=3" evidence="2">
    <location>
        <begin position="65"/>
        <end position="85"/>
    </location>
</feature>
<feature type="transmembrane region" description="Helical; Name=4" evidence="2">
    <location>
        <begin position="93"/>
        <end position="113"/>
    </location>
</feature>
<feature type="transmembrane region" description="Helical; Name=5" evidence="2">
    <location>
        <begin position="125"/>
        <end position="145"/>
    </location>
</feature>
<feature type="transmembrane region" description="Helical; Name=6" evidence="2">
    <location>
        <begin position="157"/>
        <end position="177"/>
    </location>
</feature>
<feature type="transmembrane region" description="Helical; Name=7" evidence="2">
    <location>
        <begin position="181"/>
        <end position="201"/>
    </location>
</feature>
<feature type="domain" description="MtN3/slv 1">
    <location>
        <begin position="6"/>
        <end position="89"/>
    </location>
</feature>
<feature type="domain" description="MtN3/slv 2">
    <location>
        <begin position="124"/>
        <end position="207"/>
    </location>
</feature>
<name>SWET1_XENTR</name>
<protein>
    <recommendedName>
        <fullName>Sugar transporter SWEET1</fullName>
    </recommendedName>
    <alternativeName>
        <fullName>Solute carrier family 50 member 1</fullName>
    </alternativeName>
</protein>
<gene>
    <name type="primary">slc50a1</name>
</gene>
<proteinExistence type="evidence at transcript level"/>
<organism>
    <name type="scientific">Xenopus tropicalis</name>
    <name type="common">Western clawed frog</name>
    <name type="synonym">Silurana tropicalis</name>
    <dbReference type="NCBI Taxonomy" id="8364"/>
    <lineage>
        <taxon>Eukaryota</taxon>
        <taxon>Metazoa</taxon>
        <taxon>Chordata</taxon>
        <taxon>Craniata</taxon>
        <taxon>Vertebrata</taxon>
        <taxon>Euteleostomi</taxon>
        <taxon>Amphibia</taxon>
        <taxon>Batrachia</taxon>
        <taxon>Anura</taxon>
        <taxon>Pipoidea</taxon>
        <taxon>Pipidae</taxon>
        <taxon>Xenopodinae</taxon>
        <taxon>Xenopus</taxon>
        <taxon>Silurana</taxon>
    </lineage>
</organism>
<accession>Q5EAL3</accession>
<keyword id="KW-1003">Cell membrane</keyword>
<keyword id="KW-0333">Golgi apparatus</keyword>
<keyword id="KW-0472">Membrane</keyword>
<keyword id="KW-1185">Reference proteome</keyword>
<keyword id="KW-0677">Repeat</keyword>
<keyword id="KW-0762">Sugar transport</keyword>
<keyword id="KW-0812">Transmembrane</keyword>
<keyword id="KW-1133">Transmembrane helix</keyword>
<keyword id="KW-0813">Transport</keyword>
<comment type="function">
    <text evidence="1">Mediates sugar transport across membranes.</text>
</comment>
<comment type="subcellular location">
    <subcellularLocation>
        <location evidence="1">Golgi apparatus membrane</location>
        <topology evidence="1">Multi-pass membrane protein</topology>
    </subcellularLocation>
    <subcellularLocation>
        <location evidence="1">Cell membrane</location>
        <topology evidence="1">Multi-pass membrane protein</topology>
    </subcellularLocation>
</comment>
<comment type="similarity">
    <text evidence="3">Belongs to the SWEET sugar transporter family.</text>
</comment>
<reference key="1">
    <citation type="submission" date="2005-02" db="EMBL/GenBank/DDBJ databases">
        <authorList>
            <consortium name="NIH - Xenopus Gene Collection (XGC) project"/>
        </authorList>
    </citation>
    <scope>NUCLEOTIDE SEQUENCE [LARGE SCALE MRNA]</scope>
</reference>